<sequence length="466" mass="50504">MDQSSRYVNLALKEEDLIAGGEHVLCAYIMKPKAGYGYVATAAHFAAESSTGTNVEVCTTDDFTRGVDALVYEVDEARELTKIAYPVALFHRNITDGKAMIASFLTLTMGNNQGMGDVEYAKMHDFYVPEAYRALFDGPSVNISALWKVLGRPEVDGGLVVGTIIKPKLGLRPKPFAEACHAFWLGGDFIKNDEPQGNQPFAPLRDTIALVADAMRRAQDETGEAKLFSANITADDPFEIIARGEYVLETFGENASHVALLVDGYVAGAAAITTARRRFPDNFLHYHRAGHGAVTSPQSKRGYTAFVHCKMARLQGASGIHTGTMGFGKMEGESSDRAIAYMLTQDEAQGPFYRQSWGGMKACTPIISGGMNALRMPGFFENLGNANVILTAGGGAFGHIDGPVAGARSLRQAWQAWRDGVPVLDYAREHKELARAFESFPGDADQIYPGWRKALGVEDTRSALPA</sequence>
<dbReference type="EC" id="4.1.1.39"/>
<dbReference type="EMBL" id="X00286">
    <property type="protein sequence ID" value="CAA25080.1"/>
    <property type="molecule type" value="Genomic_DNA"/>
</dbReference>
<dbReference type="PIR" id="S07295">
    <property type="entry name" value="S07295"/>
</dbReference>
<dbReference type="PDB" id="1RBA">
    <property type="method" value="X-ray"/>
    <property type="resolution" value="2.60 A"/>
    <property type="chains" value="A/B=1-466"/>
</dbReference>
<dbReference type="PDB" id="1RUS">
    <property type="method" value="X-ray"/>
    <property type="resolution" value="2.90 A"/>
    <property type="chains" value="A/B=1-466"/>
</dbReference>
<dbReference type="PDB" id="2RUS">
    <property type="method" value="X-ray"/>
    <property type="resolution" value="2.30 A"/>
    <property type="chains" value="A/B=1-466"/>
</dbReference>
<dbReference type="PDB" id="5HQM">
    <property type="method" value="X-ray"/>
    <property type="resolution" value="1.95 A"/>
    <property type="chains" value="A/B=17-303, A/B=456-466"/>
</dbReference>
<dbReference type="PDB" id="5RUB">
    <property type="method" value="X-ray"/>
    <property type="resolution" value="1.70 A"/>
    <property type="chains" value="A/B=1-466"/>
</dbReference>
<dbReference type="PDB" id="9RUB">
    <property type="method" value="X-ray"/>
    <property type="resolution" value="2.60 A"/>
    <property type="chains" value="A/B=1-466"/>
</dbReference>
<dbReference type="PDBsum" id="1RBA"/>
<dbReference type="PDBsum" id="1RUS"/>
<dbReference type="PDBsum" id="2RUS"/>
<dbReference type="PDBsum" id="5HQM"/>
<dbReference type="PDBsum" id="5RUB"/>
<dbReference type="PDBsum" id="9RUB"/>
<dbReference type="SMR" id="P04718"/>
<dbReference type="IntAct" id="P04718">
    <property type="interactions" value="1"/>
</dbReference>
<dbReference type="MINT" id="P04718"/>
<dbReference type="BioCyc" id="MetaCyc:MONOMER-13280"/>
<dbReference type="BRENDA" id="4.1.1.39">
    <property type="organism ID" value="5420"/>
</dbReference>
<dbReference type="SABIO-RK" id="P04718"/>
<dbReference type="EvolutionaryTrace" id="P04718"/>
<dbReference type="GO" id="GO:0000287">
    <property type="term" value="F:magnesium ion binding"/>
    <property type="evidence" value="ECO:0007669"/>
    <property type="project" value="UniProtKB-UniRule"/>
</dbReference>
<dbReference type="GO" id="GO:0004497">
    <property type="term" value="F:monooxygenase activity"/>
    <property type="evidence" value="ECO:0007669"/>
    <property type="project" value="UniProtKB-KW"/>
</dbReference>
<dbReference type="GO" id="GO:0016984">
    <property type="term" value="F:ribulose-bisphosphate carboxylase activity"/>
    <property type="evidence" value="ECO:0000314"/>
    <property type="project" value="CACAO"/>
</dbReference>
<dbReference type="GO" id="GO:0019253">
    <property type="term" value="P:reductive pentose-phosphate cycle"/>
    <property type="evidence" value="ECO:0007669"/>
    <property type="project" value="UniProtKB-KW"/>
</dbReference>
<dbReference type="CDD" id="cd08211">
    <property type="entry name" value="RuBisCO_large_II"/>
    <property type="match status" value="1"/>
</dbReference>
<dbReference type="Gene3D" id="3.20.20.110">
    <property type="entry name" value="Ribulose bisphosphate carboxylase, large subunit, C-terminal domain"/>
    <property type="match status" value="1"/>
</dbReference>
<dbReference type="Gene3D" id="3.30.70.150">
    <property type="entry name" value="RuBisCO large subunit, N-terminal domain"/>
    <property type="match status" value="1"/>
</dbReference>
<dbReference type="HAMAP" id="MF_01339">
    <property type="entry name" value="RuBisCO_L_type2"/>
    <property type="match status" value="1"/>
</dbReference>
<dbReference type="InterPro" id="IPR033966">
    <property type="entry name" value="RuBisCO"/>
</dbReference>
<dbReference type="InterPro" id="IPR020878">
    <property type="entry name" value="RuBisCo_large_chain_AS"/>
</dbReference>
<dbReference type="InterPro" id="IPR000685">
    <property type="entry name" value="RuBisCO_lsu_C"/>
</dbReference>
<dbReference type="InterPro" id="IPR036376">
    <property type="entry name" value="RuBisCO_lsu_C_sf"/>
</dbReference>
<dbReference type="InterPro" id="IPR017443">
    <property type="entry name" value="RuBisCO_lsu_fd_N"/>
</dbReference>
<dbReference type="InterPro" id="IPR036422">
    <property type="entry name" value="RuBisCO_lsu_N_sf"/>
</dbReference>
<dbReference type="InterPro" id="IPR020871">
    <property type="entry name" value="RuBisCO_lsuII"/>
</dbReference>
<dbReference type="NCBIfam" id="NF010002">
    <property type="entry name" value="PRK13475.1"/>
    <property type="match status" value="1"/>
</dbReference>
<dbReference type="PANTHER" id="PTHR42704">
    <property type="entry name" value="RIBULOSE BISPHOSPHATE CARBOXYLASE"/>
    <property type="match status" value="1"/>
</dbReference>
<dbReference type="PANTHER" id="PTHR42704:SF17">
    <property type="entry name" value="RIBULOSE BISPHOSPHATE CARBOXYLASE LARGE CHAIN"/>
    <property type="match status" value="1"/>
</dbReference>
<dbReference type="Pfam" id="PF00016">
    <property type="entry name" value="RuBisCO_large"/>
    <property type="match status" value="1"/>
</dbReference>
<dbReference type="Pfam" id="PF02788">
    <property type="entry name" value="RuBisCO_large_N"/>
    <property type="match status" value="1"/>
</dbReference>
<dbReference type="SFLD" id="SFLDG01052">
    <property type="entry name" value="RuBisCO"/>
    <property type="match status" value="1"/>
</dbReference>
<dbReference type="SFLD" id="SFLDS00014">
    <property type="entry name" value="RuBisCO"/>
    <property type="match status" value="1"/>
</dbReference>
<dbReference type="SFLD" id="SFLDG00301">
    <property type="entry name" value="RuBisCO-like_proteins"/>
    <property type="match status" value="1"/>
</dbReference>
<dbReference type="SUPFAM" id="SSF51649">
    <property type="entry name" value="RuBisCo, C-terminal domain"/>
    <property type="match status" value="1"/>
</dbReference>
<dbReference type="SUPFAM" id="SSF54966">
    <property type="entry name" value="RuBisCO, large subunit, small (N-terminal) domain"/>
    <property type="match status" value="1"/>
</dbReference>
<dbReference type="PROSITE" id="PS00157">
    <property type="entry name" value="RUBISCO_LARGE"/>
    <property type="match status" value="1"/>
</dbReference>
<accession>P04718</accession>
<accession>P19365</accession>
<accession>P72313</accession>
<proteinExistence type="evidence at protein level"/>
<name>RBL2_RHORU</name>
<gene>
    <name type="primary">cbbM</name>
    <name type="synonym">cbbL2</name>
    <name type="synonym">rbpL</name>
</gene>
<reference key="1">
    <citation type="journal article" date="1984" name="Mol. Gen. Genet.">
        <title>Nucleotide sequence of the ribulosebisphosphate carboxylase gene from Rhodospirillum rubrum.</title>
        <authorList>
            <person name="Nargang F."/>
            <person name="McIntosh L."/>
            <person name="Somerville C.R."/>
        </authorList>
    </citation>
    <scope>NUCLEOTIDE SEQUENCE [GENOMIC DNA]</scope>
</reference>
<reference key="2">
    <citation type="journal article" date="1983" name="Biochemistry">
        <title>Isolation and sequencing of an active-site peptide from Rhodospirillum rubrum ribulosebisphosphate carboxylase/oxygenase after affinity labeling with 2-[(bromoacetyl)amino]pentitol 1,5-bisphosphate.</title>
        <authorList>
            <person name="Fraij B."/>
            <person name="Hartman F.C."/>
        </authorList>
    </citation>
    <scope>PROTEIN SEQUENCE OF 314-337</scope>
</reference>
<reference key="3">
    <citation type="journal article" date="1986" name="EMBO J.">
        <title>Three-dimensional structure of ribulose-1,5-bisphosphate carboxylase/oxygenase from Rhodospirillum rubrum at 2.9-A resolution.</title>
        <authorList>
            <person name="Schneider G."/>
            <person name="Lindqvist Y."/>
            <person name="Braenden C.-I."/>
            <person name="Lorimer G."/>
        </authorList>
    </citation>
    <scope>X-RAY CRYSTALLOGRAPHY (2.9 ANGSTROMS)</scope>
    <scope>SUBUNIT</scope>
</reference>
<reference key="4">
    <citation type="journal article" date="1989" name="Nature">
        <title>Crystal structure of the active site of ribulose-bisphosphate carboxylase.</title>
        <authorList>
            <person name="Andersson I."/>
            <person name="Knight S."/>
            <person name="Schneider G."/>
            <person name="Lindqvist Y."/>
            <person name="Lundqvist T."/>
            <person name="Braenden C.-I."/>
            <person name="Lorimer G.H."/>
        </authorList>
    </citation>
    <scope>X-RAY CRYSTALLOGRAPHY (1.7 ANGSTROMS)</scope>
    <scope>COFACTOR</scope>
    <scope>SUBUNIT</scope>
</reference>
<reference key="5">
    <citation type="journal article" date="1990" name="J. Mol. Biol.">
        <title>Crystallographic refinement and structure of ribulose-1,5-bisphosphate carboxylase from Rhodospirillum rubrum at 1.7-A resolution.</title>
        <authorList>
            <person name="Schneider G."/>
            <person name="Lindqvist Y."/>
            <person name="Lundqvist T."/>
        </authorList>
    </citation>
    <scope>X-RAY CRYSTALLOGRAPHY (1.7 ANGSTROMS)</scope>
    <scope>SUBUNIT</scope>
</reference>
<reference key="6">
    <citation type="journal article" date="1991" name="Biochemistry">
        <title>Crystal structure of the ternary complex of ribulose-1,5-bisphosphate carboxylase, Mg(II), and activator CO2 at 2.3-A resolution.</title>
        <authorList>
            <person name="Lundqvist T."/>
            <person name="Schneider G."/>
        </authorList>
    </citation>
    <scope>X-RAY CRYSTALLOGRAPHY (2.3 ANGSTROMS) OF ACTIVATED ENZYME</scope>
    <scope>COFACTOR</scope>
    <scope>SUBUNIT</scope>
    <scope>CARBOXYLATION AT LYS-191</scope>
</reference>
<reference key="7">
    <citation type="journal article" date="1992" name="Eur. J. Biochem.">
        <title>Substitution of ASP193 to ASN at the active site of ribulose-1,5-bisphosphate carboxylase results in conformational changes.</title>
        <authorList>
            <person name="Soderlind E."/>
            <person name="Schneider G."/>
            <person name="Gutteridge S."/>
        </authorList>
    </citation>
    <scope>X-RAY CRYSTALLOGRAPHY (2.60 ANGSTROMS) OF MUTANT ASN-193</scope>
    <scope>FUNCTION</scope>
    <scope>ACTIVE SITE</scope>
    <scope>SUBUNIT</scope>
    <scope>MUTAGENESIS OF ASP-193</scope>
</reference>
<feature type="chain" id="PRO_0000062666" description="Ribulose bisphosphate carboxylase">
    <location>
        <begin position="1"/>
        <end position="466"/>
    </location>
</feature>
<feature type="active site" description="Proton acceptor">
    <location>
        <position position="166"/>
    </location>
</feature>
<feature type="active site" description="Proton acceptor">
    <location>
        <position position="287"/>
    </location>
</feature>
<feature type="binding site" description="in homodimeric partner">
    <location>
        <position position="111"/>
    </location>
    <ligand>
        <name>substrate</name>
    </ligand>
</feature>
<feature type="binding site">
    <location>
        <position position="168"/>
    </location>
    <ligand>
        <name>substrate</name>
    </ligand>
</feature>
<feature type="binding site" description="via carbamate group" evidence="4 6">
    <location>
        <position position="191"/>
    </location>
    <ligand>
        <name>Mg(2+)</name>
        <dbReference type="ChEBI" id="CHEBI:18420"/>
    </ligand>
</feature>
<feature type="binding site" evidence="4 6">
    <location>
        <position position="193"/>
    </location>
    <ligand>
        <name>Mg(2+)</name>
        <dbReference type="ChEBI" id="CHEBI:18420"/>
    </ligand>
</feature>
<feature type="binding site" evidence="4 6">
    <location>
        <position position="194"/>
    </location>
    <ligand>
        <name>Mg(2+)</name>
        <dbReference type="ChEBI" id="CHEBI:18420"/>
    </ligand>
</feature>
<feature type="binding site">
    <location>
        <position position="288"/>
    </location>
    <ligand>
        <name>substrate</name>
    </ligand>
</feature>
<feature type="binding site">
    <location>
        <position position="321"/>
    </location>
    <ligand>
        <name>substrate</name>
    </ligand>
</feature>
<feature type="binding site">
    <location>
        <position position="368"/>
    </location>
    <ligand>
        <name>substrate</name>
    </ligand>
</feature>
<feature type="site" description="Transition state stabilizer">
    <location>
        <position position="329"/>
    </location>
</feature>
<feature type="modified residue" description="N6-carboxylysine" evidence="4">
    <location>
        <position position="191"/>
    </location>
</feature>
<feature type="mutagenesis site" description="Loss of activity, decreased affinity for Mg(2+)." evidence="2 7">
    <original>D</original>
    <variation>N</variation>
    <location>
        <position position="193"/>
    </location>
</feature>
<feature type="turn" evidence="10">
    <location>
        <begin position="4"/>
        <end position="6"/>
    </location>
</feature>
<feature type="helix" evidence="10">
    <location>
        <begin position="14"/>
        <end position="20"/>
    </location>
</feature>
<feature type="strand" evidence="10">
    <location>
        <begin position="23"/>
        <end position="32"/>
    </location>
</feature>
<feature type="strand" evidence="9">
    <location>
        <begin position="34"/>
        <end position="36"/>
    </location>
</feature>
<feature type="helix" evidence="10">
    <location>
        <begin position="38"/>
        <end position="48"/>
    </location>
</feature>
<feature type="turn" evidence="9">
    <location>
        <begin position="49"/>
        <end position="51"/>
    </location>
</feature>
<feature type="strand" evidence="8">
    <location>
        <begin position="59"/>
        <end position="62"/>
    </location>
</feature>
<feature type="strand" evidence="10">
    <location>
        <begin position="70"/>
        <end position="75"/>
    </location>
</feature>
<feature type="turn" evidence="10">
    <location>
        <begin position="76"/>
        <end position="79"/>
    </location>
</feature>
<feature type="strand" evidence="10">
    <location>
        <begin position="80"/>
        <end position="86"/>
    </location>
</feature>
<feature type="helix" evidence="10">
    <location>
        <begin position="87"/>
        <end position="89"/>
    </location>
</feature>
<feature type="turn" evidence="10">
    <location>
        <begin position="94"/>
        <end position="96"/>
    </location>
</feature>
<feature type="helix" evidence="10">
    <location>
        <begin position="101"/>
        <end position="109"/>
    </location>
</feature>
<feature type="helix" evidence="10">
    <location>
        <begin position="111"/>
        <end position="113"/>
    </location>
</feature>
<feature type="strand" evidence="10">
    <location>
        <begin position="116"/>
        <end position="127"/>
    </location>
</feature>
<feature type="helix" evidence="10">
    <location>
        <begin position="130"/>
        <end position="133"/>
    </location>
</feature>
<feature type="helix" evidence="10">
    <location>
        <begin position="143"/>
        <end position="150"/>
    </location>
</feature>
<feature type="strand" evidence="10">
    <location>
        <begin position="154"/>
        <end position="156"/>
    </location>
</feature>
<feature type="strand" evidence="10">
    <location>
        <begin position="160"/>
        <end position="164"/>
    </location>
</feature>
<feature type="strand" evidence="10">
    <location>
        <begin position="166"/>
        <end position="169"/>
    </location>
</feature>
<feature type="helix" evidence="10">
    <location>
        <begin position="173"/>
        <end position="183"/>
    </location>
</feature>
<feature type="turn" evidence="10">
    <location>
        <begin position="184"/>
        <end position="186"/>
    </location>
</feature>
<feature type="strand" evidence="10">
    <location>
        <begin position="188"/>
        <end position="191"/>
    </location>
</feature>
<feature type="strand" evidence="8">
    <location>
        <begin position="197"/>
        <end position="199"/>
    </location>
</feature>
<feature type="helix" evidence="10">
    <location>
        <begin position="204"/>
        <end position="222"/>
    </location>
</feature>
<feature type="strand" evidence="10">
    <location>
        <begin position="227"/>
        <end position="231"/>
    </location>
</feature>
<feature type="helix" evidence="10">
    <location>
        <begin position="237"/>
        <end position="251"/>
    </location>
</feature>
<feature type="helix" evidence="10">
    <location>
        <begin position="252"/>
        <end position="257"/>
    </location>
</feature>
<feature type="strand" evidence="10">
    <location>
        <begin position="258"/>
        <end position="263"/>
    </location>
</feature>
<feature type="turn" evidence="10">
    <location>
        <begin position="264"/>
        <end position="266"/>
    </location>
</feature>
<feature type="helix" evidence="10">
    <location>
        <begin position="269"/>
        <end position="278"/>
    </location>
</feature>
<feature type="strand" evidence="10">
    <location>
        <begin position="284"/>
        <end position="287"/>
    </location>
</feature>
<feature type="turn" evidence="10">
    <location>
        <begin position="289"/>
        <end position="291"/>
    </location>
</feature>
<feature type="helix" evidence="10">
    <location>
        <begin position="292"/>
        <end position="295"/>
    </location>
</feature>
<feature type="strand" evidence="10">
    <location>
        <begin position="301"/>
        <end position="303"/>
    </location>
</feature>
<feature type="helix" evidence="10">
    <location>
        <begin position="305"/>
        <end position="315"/>
    </location>
</feature>
<feature type="strand" evidence="10">
    <location>
        <begin position="318"/>
        <end position="321"/>
    </location>
</feature>
<feature type="helix" evidence="10">
    <location>
        <begin position="336"/>
        <end position="344"/>
    </location>
</feature>
<feature type="strand" evidence="10">
    <location>
        <begin position="346"/>
        <end position="349"/>
    </location>
</feature>
<feature type="strand" evidence="10">
    <location>
        <begin position="354"/>
        <end position="356"/>
    </location>
</feature>
<feature type="strand" evidence="10">
    <location>
        <begin position="364"/>
        <end position="369"/>
    </location>
</feature>
<feature type="turn" evidence="10">
    <location>
        <begin position="373"/>
        <end position="375"/>
    </location>
</feature>
<feature type="helix" evidence="10">
    <location>
        <begin position="376"/>
        <end position="383"/>
    </location>
</feature>
<feature type="strand" evidence="10">
    <location>
        <begin position="389"/>
        <end position="392"/>
    </location>
</feature>
<feature type="turn" evidence="10">
    <location>
        <begin position="394"/>
        <end position="397"/>
    </location>
</feature>
<feature type="helix" evidence="10">
    <location>
        <begin position="403"/>
        <end position="419"/>
    </location>
</feature>
<feature type="helix" evidence="10">
    <location>
        <begin position="423"/>
        <end position="428"/>
    </location>
</feature>
<feature type="helix" evidence="10">
    <location>
        <begin position="431"/>
        <end position="439"/>
    </location>
</feature>
<feature type="helix" evidence="10">
    <location>
        <begin position="441"/>
        <end position="447"/>
    </location>
</feature>
<feature type="helix" evidence="10">
    <location>
        <begin position="451"/>
        <end position="455"/>
    </location>
</feature>
<organism>
    <name type="scientific">Rhodospirillum rubrum</name>
    <dbReference type="NCBI Taxonomy" id="1085"/>
    <lineage>
        <taxon>Bacteria</taxon>
        <taxon>Pseudomonadati</taxon>
        <taxon>Pseudomonadota</taxon>
        <taxon>Alphaproteobacteria</taxon>
        <taxon>Rhodospirillales</taxon>
        <taxon>Rhodospirillaceae</taxon>
        <taxon>Rhodospirillum</taxon>
    </lineage>
</organism>
<protein>
    <recommendedName>
        <fullName>Ribulose bisphosphate carboxylase</fullName>
        <shortName>RuBisCO</shortName>
        <ecNumber>4.1.1.39</ecNumber>
    </recommendedName>
</protein>
<evidence type="ECO:0000250" key="1"/>
<evidence type="ECO:0000269" key="2">
    <source>
    </source>
</evidence>
<evidence type="ECO:0000269" key="3">
    <source>
    </source>
</evidence>
<evidence type="ECO:0000269" key="4">
    <source>
    </source>
</evidence>
<evidence type="ECO:0000269" key="5">
    <source>
    </source>
</evidence>
<evidence type="ECO:0000269" key="6">
    <source ref="4"/>
</evidence>
<evidence type="ECO:0000305" key="7"/>
<evidence type="ECO:0007829" key="8">
    <source>
        <dbReference type="PDB" id="1RBA"/>
    </source>
</evidence>
<evidence type="ECO:0007829" key="9">
    <source>
        <dbReference type="PDB" id="2RUS"/>
    </source>
</evidence>
<evidence type="ECO:0007829" key="10">
    <source>
        <dbReference type="PDB" id="5RUB"/>
    </source>
</evidence>
<comment type="function">
    <text>RuBisCO catalyzes two reactions: the carboxylation of D-ribulose 1,5-bisphosphate, the primary event in carbon dioxide fixation, as well as the oxidative fragmentation of the pentose substrate. Both reactions occur simultaneously and in competition at the same active site.</text>
</comment>
<comment type="catalytic activity">
    <reaction>
        <text>2 (2R)-3-phosphoglycerate + 2 H(+) = D-ribulose 1,5-bisphosphate + CO2 + H2O</text>
        <dbReference type="Rhea" id="RHEA:23124"/>
        <dbReference type="ChEBI" id="CHEBI:15377"/>
        <dbReference type="ChEBI" id="CHEBI:15378"/>
        <dbReference type="ChEBI" id="CHEBI:16526"/>
        <dbReference type="ChEBI" id="CHEBI:57870"/>
        <dbReference type="ChEBI" id="CHEBI:58272"/>
        <dbReference type="EC" id="4.1.1.39"/>
    </reaction>
</comment>
<comment type="catalytic activity">
    <reaction>
        <text>D-ribulose 1,5-bisphosphate + O2 = 2-phosphoglycolate + (2R)-3-phosphoglycerate + 2 H(+)</text>
        <dbReference type="Rhea" id="RHEA:36631"/>
        <dbReference type="ChEBI" id="CHEBI:15378"/>
        <dbReference type="ChEBI" id="CHEBI:15379"/>
        <dbReference type="ChEBI" id="CHEBI:57870"/>
        <dbReference type="ChEBI" id="CHEBI:58033"/>
        <dbReference type="ChEBI" id="CHEBI:58272"/>
    </reaction>
</comment>
<comment type="cofactor">
    <cofactor evidence="4 6">
        <name>Mg(2+)</name>
        <dbReference type="ChEBI" id="CHEBI:18420"/>
    </cofactor>
    <text evidence="4 6">Binds 1 Mg(2+) ion per subunit.</text>
</comment>
<comment type="subunit">
    <text evidence="2 3 4 5 6">Homodimer.</text>
</comment>
<comment type="miscellaneous">
    <text evidence="1">The basic functional RuBisCO is composed of a large chain homodimer in a 'head-to-tail' conformation. In contrast to form I RuBisCO, the form II RuBisCO are composed solely of large subunits (By similarity).</text>
</comment>
<comment type="similarity">
    <text evidence="7">Belongs to the RuBisCO large chain family. Type II subfamily.</text>
</comment>
<keyword id="KW-0002">3D-structure</keyword>
<keyword id="KW-0113">Calvin cycle</keyword>
<keyword id="KW-0120">Carbon dioxide fixation</keyword>
<keyword id="KW-0903">Direct protein sequencing</keyword>
<keyword id="KW-0456">Lyase</keyword>
<keyword id="KW-0460">Magnesium</keyword>
<keyword id="KW-0479">Metal-binding</keyword>
<keyword id="KW-0503">Monooxygenase</keyword>
<keyword id="KW-0560">Oxidoreductase</keyword>
<keyword id="KW-0602">Photosynthesis</keyword>